<organism>
    <name type="scientific">Francisella tularensis subsp. tularensis (strain FSC 198)</name>
    <dbReference type="NCBI Taxonomy" id="393115"/>
    <lineage>
        <taxon>Bacteria</taxon>
        <taxon>Pseudomonadati</taxon>
        <taxon>Pseudomonadota</taxon>
        <taxon>Gammaproteobacteria</taxon>
        <taxon>Thiotrichales</taxon>
        <taxon>Francisellaceae</taxon>
        <taxon>Francisella</taxon>
    </lineage>
</organism>
<accession>Q14IU7</accession>
<sequence length="179" mass="19975">MTQKVGVLAIQGGYQKHADMFKSLGVEVKLVKFNNDFDSIDRLVIPGGESTTLLNLLNKHQIFDKLYNFCSSKPVFGTCAGSIILSKGEGYLNLLDLEVQRNAYGRQVDSFVADISFNDKNITGVFIRAPKFIVVGNQVDILSKYQNSPVLLRQANILVSSFHPELTQDPTIHEYFLAM</sequence>
<evidence type="ECO:0000255" key="1">
    <source>
        <dbReference type="HAMAP-Rule" id="MF_01615"/>
    </source>
</evidence>
<proteinExistence type="inferred from homology"/>
<protein>
    <recommendedName>
        <fullName evidence="1">Pyridoxal 5'-phosphate synthase subunit PdxT</fullName>
        <ecNumber evidence="1">4.3.3.6</ecNumber>
    </recommendedName>
    <alternativeName>
        <fullName evidence="1">Pdx2</fullName>
    </alternativeName>
    <alternativeName>
        <fullName evidence="1">Pyridoxal 5'-phosphate synthase glutaminase subunit</fullName>
        <ecNumber evidence="1">3.5.1.2</ecNumber>
    </alternativeName>
</protein>
<feature type="chain" id="PRO_0000292999" description="Pyridoxal 5'-phosphate synthase subunit PdxT">
    <location>
        <begin position="1"/>
        <end position="179"/>
    </location>
</feature>
<feature type="active site" description="Nucleophile" evidence="1">
    <location>
        <position position="79"/>
    </location>
</feature>
<feature type="active site" description="Charge relay system" evidence="1">
    <location>
        <position position="163"/>
    </location>
</feature>
<feature type="active site" description="Charge relay system" evidence="1">
    <location>
        <position position="165"/>
    </location>
</feature>
<feature type="binding site" evidence="1">
    <location>
        <begin position="48"/>
        <end position="50"/>
    </location>
    <ligand>
        <name>L-glutamine</name>
        <dbReference type="ChEBI" id="CHEBI:58359"/>
    </ligand>
</feature>
<feature type="binding site" evidence="1">
    <location>
        <position position="101"/>
    </location>
    <ligand>
        <name>L-glutamine</name>
        <dbReference type="ChEBI" id="CHEBI:58359"/>
    </ligand>
</feature>
<feature type="binding site" evidence="1">
    <location>
        <begin position="127"/>
        <end position="128"/>
    </location>
    <ligand>
        <name>L-glutamine</name>
        <dbReference type="ChEBI" id="CHEBI:58359"/>
    </ligand>
</feature>
<reference key="1">
    <citation type="journal article" date="2007" name="PLoS ONE">
        <title>Genome sequencing shows that European isolates of Francisella tularensis subspecies tularensis are almost identical to US laboratory strain Schu S4.</title>
        <authorList>
            <person name="Chaudhuri R.R."/>
            <person name="Ren C.-P."/>
            <person name="Desmond L."/>
            <person name="Vincent G.A."/>
            <person name="Silman N.J."/>
            <person name="Brehm J.K."/>
            <person name="Elmore M.J."/>
            <person name="Hudson M.J."/>
            <person name="Forsman M."/>
            <person name="Isherwood K.E."/>
            <person name="Gurycova D."/>
            <person name="Minton N.P."/>
            <person name="Titball R.W."/>
            <person name="Pallen M.J."/>
            <person name="Vipond R."/>
        </authorList>
    </citation>
    <scope>NUCLEOTIDE SEQUENCE [LARGE SCALE GENOMIC DNA]</scope>
    <source>
        <strain>FSC 198</strain>
    </source>
</reference>
<comment type="function">
    <text evidence="1">Catalyzes the hydrolysis of glutamine to glutamate and ammonia as part of the biosynthesis of pyridoxal 5'-phosphate. The resulting ammonia molecule is channeled to the active site of PdxS.</text>
</comment>
<comment type="catalytic activity">
    <reaction evidence="1">
        <text>aldehydo-D-ribose 5-phosphate + D-glyceraldehyde 3-phosphate + L-glutamine = pyridoxal 5'-phosphate + L-glutamate + phosphate + 3 H2O + H(+)</text>
        <dbReference type="Rhea" id="RHEA:31507"/>
        <dbReference type="ChEBI" id="CHEBI:15377"/>
        <dbReference type="ChEBI" id="CHEBI:15378"/>
        <dbReference type="ChEBI" id="CHEBI:29985"/>
        <dbReference type="ChEBI" id="CHEBI:43474"/>
        <dbReference type="ChEBI" id="CHEBI:58273"/>
        <dbReference type="ChEBI" id="CHEBI:58359"/>
        <dbReference type="ChEBI" id="CHEBI:59776"/>
        <dbReference type="ChEBI" id="CHEBI:597326"/>
        <dbReference type="EC" id="4.3.3.6"/>
    </reaction>
</comment>
<comment type="catalytic activity">
    <reaction evidence="1">
        <text>L-glutamine + H2O = L-glutamate + NH4(+)</text>
        <dbReference type="Rhea" id="RHEA:15889"/>
        <dbReference type="ChEBI" id="CHEBI:15377"/>
        <dbReference type="ChEBI" id="CHEBI:28938"/>
        <dbReference type="ChEBI" id="CHEBI:29985"/>
        <dbReference type="ChEBI" id="CHEBI:58359"/>
        <dbReference type="EC" id="3.5.1.2"/>
    </reaction>
</comment>
<comment type="pathway">
    <text evidence="1">Cofactor biosynthesis; pyridoxal 5'-phosphate biosynthesis.</text>
</comment>
<comment type="subunit">
    <text evidence="1">In the presence of PdxS, forms a dodecamer of heterodimers. Only shows activity in the heterodimer.</text>
</comment>
<comment type="similarity">
    <text evidence="1">Belongs to the glutaminase PdxT/SNO family.</text>
</comment>
<gene>
    <name evidence="1" type="primary">pdxT</name>
    <name type="ordered locus">FTF0512</name>
</gene>
<keyword id="KW-0315">Glutamine amidotransferase</keyword>
<keyword id="KW-0378">Hydrolase</keyword>
<keyword id="KW-0456">Lyase</keyword>
<keyword id="KW-0663">Pyridoxal phosphate</keyword>
<name>PDXT_FRAT1</name>
<dbReference type="EC" id="4.3.3.6" evidence="1"/>
<dbReference type="EC" id="3.5.1.2" evidence="1"/>
<dbReference type="EMBL" id="AM286280">
    <property type="protein sequence ID" value="CAL08528.1"/>
    <property type="molecule type" value="Genomic_DNA"/>
</dbReference>
<dbReference type="RefSeq" id="WP_003026851.1">
    <property type="nucleotide sequence ID" value="NC_008245.1"/>
</dbReference>
<dbReference type="SMR" id="Q14IU7"/>
<dbReference type="KEGG" id="ftf:FTF0512"/>
<dbReference type="HOGENOM" id="CLU_069674_2_0_6"/>
<dbReference type="UniPathway" id="UPA00245"/>
<dbReference type="GO" id="GO:0005829">
    <property type="term" value="C:cytosol"/>
    <property type="evidence" value="ECO:0007669"/>
    <property type="project" value="TreeGrafter"/>
</dbReference>
<dbReference type="GO" id="GO:1903600">
    <property type="term" value="C:glutaminase complex"/>
    <property type="evidence" value="ECO:0007669"/>
    <property type="project" value="TreeGrafter"/>
</dbReference>
<dbReference type="GO" id="GO:0004359">
    <property type="term" value="F:glutaminase activity"/>
    <property type="evidence" value="ECO:0007669"/>
    <property type="project" value="UniProtKB-UniRule"/>
</dbReference>
<dbReference type="GO" id="GO:0036381">
    <property type="term" value="F:pyridoxal 5'-phosphate synthase (glutamine hydrolysing) activity"/>
    <property type="evidence" value="ECO:0007669"/>
    <property type="project" value="UniProtKB-UniRule"/>
</dbReference>
<dbReference type="GO" id="GO:0006543">
    <property type="term" value="P:glutamine catabolic process"/>
    <property type="evidence" value="ECO:0007669"/>
    <property type="project" value="UniProtKB-UniRule"/>
</dbReference>
<dbReference type="GO" id="GO:0042823">
    <property type="term" value="P:pyridoxal phosphate biosynthetic process"/>
    <property type="evidence" value="ECO:0007669"/>
    <property type="project" value="UniProtKB-UniRule"/>
</dbReference>
<dbReference type="GO" id="GO:0008614">
    <property type="term" value="P:pyridoxine metabolic process"/>
    <property type="evidence" value="ECO:0007669"/>
    <property type="project" value="TreeGrafter"/>
</dbReference>
<dbReference type="CDD" id="cd01749">
    <property type="entry name" value="GATase1_PB"/>
    <property type="match status" value="1"/>
</dbReference>
<dbReference type="Gene3D" id="3.40.50.880">
    <property type="match status" value="1"/>
</dbReference>
<dbReference type="HAMAP" id="MF_01615">
    <property type="entry name" value="PdxT"/>
    <property type="match status" value="1"/>
</dbReference>
<dbReference type="InterPro" id="IPR029062">
    <property type="entry name" value="Class_I_gatase-like"/>
</dbReference>
<dbReference type="InterPro" id="IPR002161">
    <property type="entry name" value="PdxT/SNO"/>
</dbReference>
<dbReference type="InterPro" id="IPR021196">
    <property type="entry name" value="PdxT/SNO_CS"/>
</dbReference>
<dbReference type="NCBIfam" id="TIGR03800">
    <property type="entry name" value="PLP_synth_Pdx2"/>
    <property type="match status" value="1"/>
</dbReference>
<dbReference type="NCBIfam" id="NF010050">
    <property type="entry name" value="PRK13526.1"/>
    <property type="match status" value="1"/>
</dbReference>
<dbReference type="PANTHER" id="PTHR31559">
    <property type="entry name" value="PYRIDOXAL 5'-PHOSPHATE SYNTHASE SUBUNIT SNO"/>
    <property type="match status" value="1"/>
</dbReference>
<dbReference type="PANTHER" id="PTHR31559:SF0">
    <property type="entry name" value="PYRIDOXAL 5'-PHOSPHATE SYNTHASE SUBUNIT SNO1-RELATED"/>
    <property type="match status" value="1"/>
</dbReference>
<dbReference type="Pfam" id="PF01174">
    <property type="entry name" value="SNO"/>
    <property type="match status" value="1"/>
</dbReference>
<dbReference type="PIRSF" id="PIRSF005639">
    <property type="entry name" value="Glut_amidoT_SNO"/>
    <property type="match status" value="1"/>
</dbReference>
<dbReference type="SUPFAM" id="SSF52317">
    <property type="entry name" value="Class I glutamine amidotransferase-like"/>
    <property type="match status" value="1"/>
</dbReference>
<dbReference type="PROSITE" id="PS01236">
    <property type="entry name" value="PDXT_SNO_1"/>
    <property type="match status" value="1"/>
</dbReference>
<dbReference type="PROSITE" id="PS51130">
    <property type="entry name" value="PDXT_SNO_2"/>
    <property type="match status" value="1"/>
</dbReference>